<evidence type="ECO:0000255" key="1">
    <source>
        <dbReference type="HAMAP-Rule" id="MF_01366"/>
    </source>
</evidence>
<evidence type="ECO:0000305" key="2"/>
<keyword id="KW-0687">Ribonucleoprotein</keyword>
<keyword id="KW-0689">Ribosomal protein</keyword>
<protein>
    <recommendedName>
        <fullName evidence="1">Large ribosomal subunit protein uL13</fullName>
    </recommendedName>
    <alternativeName>
        <fullName evidence="2">50S ribosomal protein L13</fullName>
    </alternativeName>
</protein>
<gene>
    <name evidence="1" type="primary">rplM</name>
    <name type="ordered locus">MS1283</name>
</gene>
<comment type="function">
    <text evidence="1">This protein is one of the early assembly proteins of the 50S ribosomal subunit, although it is not seen to bind rRNA by itself. It is important during the early stages of 50S assembly.</text>
</comment>
<comment type="subunit">
    <text evidence="1">Part of the 50S ribosomal subunit.</text>
</comment>
<comment type="similarity">
    <text evidence="1">Belongs to the universal ribosomal protein uL13 family.</text>
</comment>
<comment type="sequence caution" evidence="2">
    <conflict type="erroneous initiation">
        <sequence resource="EMBL-CDS" id="AAU37890"/>
    </conflict>
</comment>
<dbReference type="EMBL" id="AE016827">
    <property type="protein sequence ID" value="AAU37890.1"/>
    <property type="status" value="ALT_INIT"/>
    <property type="molecule type" value="Genomic_DNA"/>
</dbReference>
<dbReference type="RefSeq" id="WP_011200457.1">
    <property type="nucleotide sequence ID" value="NC_006300.1"/>
</dbReference>
<dbReference type="SMR" id="Q65T20"/>
<dbReference type="STRING" id="221988.MS1283"/>
<dbReference type="KEGG" id="msu:MS1283"/>
<dbReference type="eggNOG" id="COG0102">
    <property type="taxonomic scope" value="Bacteria"/>
</dbReference>
<dbReference type="HOGENOM" id="CLU_082184_2_2_6"/>
<dbReference type="OrthoDB" id="9801330at2"/>
<dbReference type="Proteomes" id="UP000000607">
    <property type="component" value="Chromosome"/>
</dbReference>
<dbReference type="GO" id="GO:0022625">
    <property type="term" value="C:cytosolic large ribosomal subunit"/>
    <property type="evidence" value="ECO:0007669"/>
    <property type="project" value="TreeGrafter"/>
</dbReference>
<dbReference type="GO" id="GO:0003729">
    <property type="term" value="F:mRNA binding"/>
    <property type="evidence" value="ECO:0007669"/>
    <property type="project" value="TreeGrafter"/>
</dbReference>
<dbReference type="GO" id="GO:0003735">
    <property type="term" value="F:structural constituent of ribosome"/>
    <property type="evidence" value="ECO:0007669"/>
    <property type="project" value="InterPro"/>
</dbReference>
<dbReference type="GO" id="GO:0017148">
    <property type="term" value="P:negative regulation of translation"/>
    <property type="evidence" value="ECO:0007669"/>
    <property type="project" value="TreeGrafter"/>
</dbReference>
<dbReference type="GO" id="GO:0006412">
    <property type="term" value="P:translation"/>
    <property type="evidence" value="ECO:0007669"/>
    <property type="project" value="UniProtKB-UniRule"/>
</dbReference>
<dbReference type="CDD" id="cd00392">
    <property type="entry name" value="Ribosomal_L13"/>
    <property type="match status" value="1"/>
</dbReference>
<dbReference type="FunFam" id="3.90.1180.10:FF:000001">
    <property type="entry name" value="50S ribosomal protein L13"/>
    <property type="match status" value="1"/>
</dbReference>
<dbReference type="Gene3D" id="3.90.1180.10">
    <property type="entry name" value="Ribosomal protein L13"/>
    <property type="match status" value="1"/>
</dbReference>
<dbReference type="HAMAP" id="MF_01366">
    <property type="entry name" value="Ribosomal_uL13"/>
    <property type="match status" value="1"/>
</dbReference>
<dbReference type="InterPro" id="IPR005822">
    <property type="entry name" value="Ribosomal_uL13"/>
</dbReference>
<dbReference type="InterPro" id="IPR005823">
    <property type="entry name" value="Ribosomal_uL13_bac-type"/>
</dbReference>
<dbReference type="InterPro" id="IPR023563">
    <property type="entry name" value="Ribosomal_uL13_CS"/>
</dbReference>
<dbReference type="InterPro" id="IPR036899">
    <property type="entry name" value="Ribosomal_uL13_sf"/>
</dbReference>
<dbReference type="NCBIfam" id="TIGR01066">
    <property type="entry name" value="rplM_bact"/>
    <property type="match status" value="1"/>
</dbReference>
<dbReference type="PANTHER" id="PTHR11545:SF2">
    <property type="entry name" value="LARGE RIBOSOMAL SUBUNIT PROTEIN UL13M"/>
    <property type="match status" value="1"/>
</dbReference>
<dbReference type="PANTHER" id="PTHR11545">
    <property type="entry name" value="RIBOSOMAL PROTEIN L13"/>
    <property type="match status" value="1"/>
</dbReference>
<dbReference type="Pfam" id="PF00572">
    <property type="entry name" value="Ribosomal_L13"/>
    <property type="match status" value="1"/>
</dbReference>
<dbReference type="PIRSF" id="PIRSF002181">
    <property type="entry name" value="Ribosomal_L13"/>
    <property type="match status" value="1"/>
</dbReference>
<dbReference type="SUPFAM" id="SSF52161">
    <property type="entry name" value="Ribosomal protein L13"/>
    <property type="match status" value="1"/>
</dbReference>
<dbReference type="PROSITE" id="PS00783">
    <property type="entry name" value="RIBOSOMAL_L13"/>
    <property type="match status" value="1"/>
</dbReference>
<proteinExistence type="inferred from homology"/>
<feature type="chain" id="PRO_0000261747" description="Large ribosomal subunit protein uL13">
    <location>
        <begin position="1"/>
        <end position="142"/>
    </location>
</feature>
<reference key="1">
    <citation type="journal article" date="2004" name="Nat. Biotechnol.">
        <title>The genome sequence of the capnophilic rumen bacterium Mannheimia succiniciproducens.</title>
        <authorList>
            <person name="Hong S.H."/>
            <person name="Kim J.S."/>
            <person name="Lee S.Y."/>
            <person name="In Y.H."/>
            <person name="Choi S.S."/>
            <person name="Rih J.-K."/>
            <person name="Kim C.H."/>
            <person name="Jeong H."/>
            <person name="Hur C.G."/>
            <person name="Kim J.J."/>
        </authorList>
    </citation>
    <scope>NUCLEOTIDE SEQUENCE [LARGE SCALE GENOMIC DNA]</scope>
    <source>
        <strain>KCTC 0769BP / MBEL55E</strain>
    </source>
</reference>
<accession>Q65T20</accession>
<organism>
    <name type="scientific">Mannheimia succiniciproducens (strain KCTC 0769BP / MBEL55E)</name>
    <dbReference type="NCBI Taxonomy" id="221988"/>
    <lineage>
        <taxon>Bacteria</taxon>
        <taxon>Pseudomonadati</taxon>
        <taxon>Pseudomonadota</taxon>
        <taxon>Gammaproteobacteria</taxon>
        <taxon>Pasteurellales</taxon>
        <taxon>Pasteurellaceae</taxon>
        <taxon>Basfia</taxon>
    </lineage>
</organism>
<sequence>MKTFVAKPETVKRDWYVVDATGKTLGRLATELASRLRGKHKAEYTPHVDTGDYIIVINADKVAVTGRKETDKVYYWHTGYVGGIKQATFKEMIARRPEAVIEIAVKGMLPKGPLGRAMFRKLKVYAGSQHEHAAQQPQVLDI</sequence>
<name>RL13_MANSM</name>